<dbReference type="EMBL" id="M99055">
    <property type="protein sequence ID" value="AAA29353.1"/>
    <property type="molecule type" value="Genomic_DNA"/>
</dbReference>
<dbReference type="SMR" id="P41569"/>
<dbReference type="VEuPathDB" id="VectorBase:AALC636_008463"/>
<dbReference type="VEuPathDB" id="VectorBase:AALF004104"/>
<dbReference type="VEuPathDB" id="VectorBase:AALFPA_075966"/>
<dbReference type="Proteomes" id="UP000069940">
    <property type="component" value="Unassembled WGS sequence"/>
</dbReference>
<dbReference type="GO" id="GO:0022625">
    <property type="term" value="C:cytosolic large ribosomal subunit"/>
    <property type="evidence" value="ECO:0007669"/>
    <property type="project" value="TreeGrafter"/>
</dbReference>
<dbReference type="GO" id="GO:0019843">
    <property type="term" value="F:rRNA binding"/>
    <property type="evidence" value="ECO:0007669"/>
    <property type="project" value="UniProtKB-KW"/>
</dbReference>
<dbReference type="GO" id="GO:0003735">
    <property type="term" value="F:structural constituent of ribosome"/>
    <property type="evidence" value="ECO:0007669"/>
    <property type="project" value="InterPro"/>
</dbReference>
<dbReference type="GO" id="GO:0002181">
    <property type="term" value="P:cytoplasmic translation"/>
    <property type="evidence" value="ECO:0007669"/>
    <property type="project" value="TreeGrafter"/>
</dbReference>
<dbReference type="FunFam" id="2.40.50.140:FF:000020">
    <property type="entry name" value="60S ribosomal protein L2"/>
    <property type="match status" value="1"/>
</dbReference>
<dbReference type="FunFam" id="4.10.950.10:FF:000002">
    <property type="entry name" value="60S ribosomal protein L2"/>
    <property type="match status" value="1"/>
</dbReference>
<dbReference type="FunFam" id="2.30.30.30:FF:000006">
    <property type="entry name" value="60S ribosomal protein L8"/>
    <property type="match status" value="1"/>
</dbReference>
<dbReference type="Gene3D" id="2.30.30.30">
    <property type="match status" value="1"/>
</dbReference>
<dbReference type="Gene3D" id="2.40.50.140">
    <property type="entry name" value="Nucleic acid-binding proteins"/>
    <property type="match status" value="1"/>
</dbReference>
<dbReference type="Gene3D" id="4.10.950.10">
    <property type="entry name" value="Ribosomal protein L2, domain 3"/>
    <property type="match status" value="1"/>
</dbReference>
<dbReference type="InterPro" id="IPR012340">
    <property type="entry name" value="NA-bd_OB-fold"/>
</dbReference>
<dbReference type="InterPro" id="IPR014722">
    <property type="entry name" value="Rib_uL2_dom2"/>
</dbReference>
<dbReference type="InterPro" id="IPR002171">
    <property type="entry name" value="Ribosomal_uL2"/>
</dbReference>
<dbReference type="InterPro" id="IPR023672">
    <property type="entry name" value="Ribosomal_uL2_arc_euk"/>
</dbReference>
<dbReference type="InterPro" id="IPR022669">
    <property type="entry name" value="Ribosomal_uL2_C"/>
</dbReference>
<dbReference type="InterPro" id="IPR022671">
    <property type="entry name" value="Ribosomal_uL2_CS"/>
</dbReference>
<dbReference type="InterPro" id="IPR014726">
    <property type="entry name" value="Ribosomal_uL2_dom3"/>
</dbReference>
<dbReference type="InterPro" id="IPR022666">
    <property type="entry name" value="Ribosomal_uL2_RNA-bd_dom"/>
</dbReference>
<dbReference type="InterPro" id="IPR008991">
    <property type="entry name" value="Translation_prot_SH3-like_sf"/>
</dbReference>
<dbReference type="NCBIfam" id="NF007180">
    <property type="entry name" value="PRK09612.1"/>
    <property type="match status" value="1"/>
</dbReference>
<dbReference type="PANTHER" id="PTHR13691:SF16">
    <property type="entry name" value="LARGE RIBOSOMAL SUBUNIT PROTEIN UL2"/>
    <property type="match status" value="1"/>
</dbReference>
<dbReference type="PANTHER" id="PTHR13691">
    <property type="entry name" value="RIBOSOMAL PROTEIN L2"/>
    <property type="match status" value="1"/>
</dbReference>
<dbReference type="Pfam" id="PF00181">
    <property type="entry name" value="Ribosomal_L2"/>
    <property type="match status" value="1"/>
</dbReference>
<dbReference type="Pfam" id="PF03947">
    <property type="entry name" value="Ribosomal_L2_C"/>
    <property type="match status" value="1"/>
</dbReference>
<dbReference type="PIRSF" id="PIRSF002158">
    <property type="entry name" value="Ribosomal_L2"/>
    <property type="match status" value="1"/>
</dbReference>
<dbReference type="SMART" id="SM01383">
    <property type="entry name" value="Ribosomal_L2"/>
    <property type="match status" value="1"/>
</dbReference>
<dbReference type="SMART" id="SM01382">
    <property type="entry name" value="Ribosomal_L2_C"/>
    <property type="match status" value="1"/>
</dbReference>
<dbReference type="SUPFAM" id="SSF50249">
    <property type="entry name" value="Nucleic acid-binding proteins"/>
    <property type="match status" value="1"/>
</dbReference>
<dbReference type="SUPFAM" id="SSF50104">
    <property type="entry name" value="Translation proteins SH3-like domain"/>
    <property type="match status" value="1"/>
</dbReference>
<dbReference type="PROSITE" id="PS00467">
    <property type="entry name" value="RIBOSOMAL_L2"/>
    <property type="match status" value="1"/>
</dbReference>
<comment type="subcellular location">
    <subcellularLocation>
        <location>Cytoplasm</location>
    </subcellularLocation>
</comment>
<comment type="similarity">
    <text evidence="2">Belongs to the universal ribosomal protein uL2 family.</text>
</comment>
<accession>P41569</accession>
<evidence type="ECO:0000256" key="1">
    <source>
        <dbReference type="SAM" id="MobiDB-lite"/>
    </source>
</evidence>
<evidence type="ECO:0000305" key="2"/>
<proteinExistence type="inferred from homology"/>
<feature type="chain" id="PRO_0000129752" description="Large ribosomal subunit protein uL2">
    <location>
        <begin position="1"/>
        <end position="261"/>
    </location>
</feature>
<feature type="region of interest" description="Disordered" evidence="1">
    <location>
        <begin position="207"/>
        <end position="233"/>
    </location>
</feature>
<reference key="1">
    <citation type="journal article" date="1992" name="Insect Mol. Biol.">
        <title>Sequence analysis of a mosquito ribosomal protein rpL8 gene and its upstream regulatory region.</title>
        <authorList>
            <person name="Lan Q."/>
            <person name="Fallon A.M."/>
        </authorList>
    </citation>
    <scope>NUCLEOTIDE SEQUENCE [GENOMIC DNA]</scope>
</reference>
<gene>
    <name type="primary">RpL8</name>
</gene>
<name>RL8_AEDAL</name>
<sequence length="261" mass="28681">MGRVIRAQRKGEGSVFTAHTKKRKGEPKLRALDYAERHGYLKGTVKQIIHDPGRGAPLAVVHFRDPYKFNVRKQLFIAAEGMYTGQFVYCGKRAQLQIGNVLPIGLMPEGTIVCNLEEKTGDRGKLARTSGNYASVIAHNPDTKRTRVKLPSGAKKVLPSANRAMVGIVAGGGRIDKPILKAGRAYRKYKVKRNCWPKVRGVAMNPVEHPHGGGNHQHIGKASTVKRGTPPGRKVGLIAARRTGRIRGGKGDEKFKEKEKK</sequence>
<keyword id="KW-0963">Cytoplasm</keyword>
<keyword id="KW-0687">Ribonucleoprotein</keyword>
<keyword id="KW-0689">Ribosomal protein</keyword>
<keyword id="KW-0694">RNA-binding</keyword>
<keyword id="KW-0699">rRNA-binding</keyword>
<protein>
    <recommendedName>
        <fullName evidence="2">Large ribosomal subunit protein uL2</fullName>
    </recommendedName>
    <alternativeName>
        <fullName>60S ribosomal protein L8</fullName>
    </alternativeName>
</protein>
<organism>
    <name type="scientific">Aedes albopictus</name>
    <name type="common">Asian tiger mosquito</name>
    <name type="synonym">Stegomyia albopicta</name>
    <dbReference type="NCBI Taxonomy" id="7160"/>
    <lineage>
        <taxon>Eukaryota</taxon>
        <taxon>Metazoa</taxon>
        <taxon>Ecdysozoa</taxon>
        <taxon>Arthropoda</taxon>
        <taxon>Hexapoda</taxon>
        <taxon>Insecta</taxon>
        <taxon>Pterygota</taxon>
        <taxon>Neoptera</taxon>
        <taxon>Endopterygota</taxon>
        <taxon>Diptera</taxon>
        <taxon>Nematocera</taxon>
        <taxon>Culicoidea</taxon>
        <taxon>Culicidae</taxon>
        <taxon>Culicinae</taxon>
        <taxon>Aedini</taxon>
        <taxon>Aedes</taxon>
        <taxon>Stegomyia</taxon>
    </lineage>
</organism>